<protein>
    <recommendedName>
        <fullName>DNA-binding protein HTa</fullName>
    </recommendedName>
</protein>
<reference key="1">
    <citation type="journal article" date="1981" name="J. Biol. Chem.">
        <title>A histone-like protein (HTa) from Thermoplasma acidophilum. I. Purification and properties.</title>
        <authorList>
            <person name="Delange R.J."/>
            <person name="Green G.R."/>
            <person name="Searcy D.G."/>
        </authorList>
    </citation>
    <scope>PROTEIN SEQUENCE OF 1-3 AND 2-48</scope>
</reference>
<reference key="2">
    <citation type="journal article" date="1981" name="J. Biol. Chem.">
        <title>A histone-like protein (HTa) from Thermoplasma acidophilum. II. Complete amino acid sequence.</title>
        <authorList>
            <person name="Delange R.J."/>
            <person name="Williams L.C."/>
            <person name="Searcy D.G."/>
        </authorList>
    </citation>
    <scope>PROTEIN SEQUENCE OF 2-90</scope>
</reference>
<reference key="3">
    <citation type="journal article" date="2000" name="Nature">
        <title>The genome sequence of the thermoacidophilic scavenger Thermoplasma acidophilum.</title>
        <authorList>
            <person name="Ruepp A."/>
            <person name="Graml W."/>
            <person name="Santos-Martinez M.-L."/>
            <person name="Koretke K.K."/>
            <person name="Volker C."/>
            <person name="Mewes H.-W."/>
            <person name="Frishman D."/>
            <person name="Stocker S."/>
            <person name="Lupas A.N."/>
            <person name="Baumeister W."/>
        </authorList>
    </citation>
    <scope>NUCLEOTIDE SEQUENCE [LARGE SCALE GENOMIC DNA]</scope>
    <source>
        <strain>ATCC 25905 / DSM 1728 / JCM 9062 / NBRC 15155 / AMRC-C165</strain>
    </source>
</reference>
<reference key="4">
    <citation type="journal article" date="1980" name="Biochim. Biophys. Acta">
        <title>Thermoplasma acidophilum histone-like protein. Partial amino acid sequence suggestive of homology to eukaryotic histones.</title>
        <authorList>
            <person name="Searcy D.G."/>
            <person name="Delange R.J."/>
        </authorList>
    </citation>
    <scope>PROTEIN SEQUENCE OF 1-24</scope>
</reference>
<accession>P02345</accession>
<proteinExistence type="evidence at protein level"/>
<gene>
    <name type="ordered locus">Ta0093</name>
</gene>
<comment type="function">
    <text>Histone-like DNA-binding protein which is capable of wrapping DNA to stabilize it, and thus to prevent its denaturation under extreme environmental conditions.</text>
</comment>
<comment type="subunit">
    <text>Homotetramer.</text>
</comment>
<comment type="similarity">
    <text evidence="1">Belongs to the bacterial histone-like protein family.</text>
</comment>
<dbReference type="EMBL" id="AL445063">
    <property type="protein sequence ID" value="CAC11241.1"/>
    <property type="molecule type" value="Genomic_DNA"/>
</dbReference>
<dbReference type="PIR" id="A92338">
    <property type="entry name" value="DNYTXA"/>
</dbReference>
<dbReference type="RefSeq" id="WP_010900520.1">
    <property type="nucleotide sequence ID" value="NC_002578.1"/>
</dbReference>
<dbReference type="SMR" id="P02345"/>
<dbReference type="STRING" id="273075.gene:9571308"/>
<dbReference type="PaxDb" id="273075-Ta0093"/>
<dbReference type="EnsemblBacteria" id="CAC11241">
    <property type="protein sequence ID" value="CAC11241"/>
    <property type="gene ID" value="CAC11241"/>
</dbReference>
<dbReference type="KEGG" id="tac:Ta0093"/>
<dbReference type="eggNOG" id="arCOG05336">
    <property type="taxonomic scope" value="Archaea"/>
</dbReference>
<dbReference type="HOGENOM" id="CLU_105066_3_3_2"/>
<dbReference type="InParanoid" id="P02345"/>
<dbReference type="OrthoDB" id="55723at2157"/>
<dbReference type="Proteomes" id="UP000001024">
    <property type="component" value="Chromosome"/>
</dbReference>
<dbReference type="GO" id="GO:0005829">
    <property type="term" value="C:cytosol"/>
    <property type="evidence" value="ECO:0007669"/>
    <property type="project" value="TreeGrafter"/>
</dbReference>
<dbReference type="GO" id="GO:0003677">
    <property type="term" value="F:DNA binding"/>
    <property type="evidence" value="ECO:0007669"/>
    <property type="project" value="UniProtKB-KW"/>
</dbReference>
<dbReference type="GO" id="GO:0030527">
    <property type="term" value="F:structural constituent of chromatin"/>
    <property type="evidence" value="ECO:0007669"/>
    <property type="project" value="InterPro"/>
</dbReference>
<dbReference type="GO" id="GO:0030261">
    <property type="term" value="P:chromosome condensation"/>
    <property type="evidence" value="ECO:0007669"/>
    <property type="project" value="UniProtKB-KW"/>
</dbReference>
<dbReference type="Gene3D" id="4.10.520.10">
    <property type="entry name" value="IHF-like DNA-binding proteins"/>
    <property type="match status" value="1"/>
</dbReference>
<dbReference type="InterPro" id="IPR000119">
    <property type="entry name" value="Hist_DNA-bd"/>
</dbReference>
<dbReference type="InterPro" id="IPR020816">
    <property type="entry name" value="Histone-like_DNA-bd_CS"/>
</dbReference>
<dbReference type="InterPro" id="IPR010992">
    <property type="entry name" value="IHF-like_DNA-bd_dom_sf"/>
</dbReference>
<dbReference type="PANTHER" id="PTHR33175">
    <property type="entry name" value="DNA-BINDING PROTEIN HU"/>
    <property type="match status" value="1"/>
</dbReference>
<dbReference type="PANTHER" id="PTHR33175:SF3">
    <property type="entry name" value="DNA-BINDING PROTEIN HU-BETA"/>
    <property type="match status" value="1"/>
</dbReference>
<dbReference type="Pfam" id="PF00216">
    <property type="entry name" value="Bac_DNA_binding"/>
    <property type="match status" value="1"/>
</dbReference>
<dbReference type="PRINTS" id="PR01727">
    <property type="entry name" value="DNABINDINGHU"/>
</dbReference>
<dbReference type="SMART" id="SM00411">
    <property type="entry name" value="BHL"/>
    <property type="match status" value="1"/>
</dbReference>
<dbReference type="SUPFAM" id="SSF47729">
    <property type="entry name" value="IHF-like DNA-binding proteins"/>
    <property type="match status" value="1"/>
</dbReference>
<dbReference type="PROSITE" id="PS00045">
    <property type="entry name" value="HISTONE_LIKE"/>
    <property type="match status" value="1"/>
</dbReference>
<evidence type="ECO:0000305" key="1"/>
<feature type="chain" id="PRO_0000104999" description="DNA-binding protein HTa">
    <location>
        <begin position="1"/>
        <end position="90"/>
    </location>
</feature>
<feature type="sequence variant" description="In a variant.">
    <location>
        <position position="1"/>
    </location>
</feature>
<feature type="sequence conflict" description="In Ref. 1; AA sequence." evidence="1" ref="1">
    <original>Q</original>
    <variation>E</variation>
    <location>
        <position position="36"/>
    </location>
</feature>
<sequence>MVGISELSKEVAKKANTTQKVARTVIKSFLDEIVSQANGGQKINLAGFGIFERRTQGPRKARNPQTKKVIEVPSKKKFVFRASSKIKYQQ</sequence>
<name>DBH_THEAC</name>
<organism>
    <name type="scientific">Thermoplasma acidophilum (strain ATCC 25905 / DSM 1728 / JCM 9062 / NBRC 15155 / AMRC-C165)</name>
    <dbReference type="NCBI Taxonomy" id="273075"/>
    <lineage>
        <taxon>Archaea</taxon>
        <taxon>Methanobacteriati</taxon>
        <taxon>Thermoplasmatota</taxon>
        <taxon>Thermoplasmata</taxon>
        <taxon>Thermoplasmatales</taxon>
        <taxon>Thermoplasmataceae</taxon>
        <taxon>Thermoplasma</taxon>
    </lineage>
</organism>
<keyword id="KW-0903">Direct protein sequencing</keyword>
<keyword id="KW-0226">DNA condensation</keyword>
<keyword id="KW-0238">DNA-binding</keyword>
<keyword id="KW-1185">Reference proteome</keyword>